<comment type="function">
    <text evidence="1">Involved in pre-60S ribosomal particles maturation by promoting the nuclear export of the 60S ribosome.</text>
</comment>
<comment type="subunit">
    <text evidence="1">Associates with pre-60S ribosomal particles; released from the pre-60S particle very early in the cytoplasm.</text>
</comment>
<comment type="subcellular location">
    <subcellularLocation>
        <location evidence="1">Nucleus</location>
    </subcellularLocation>
    <subcellularLocation>
        <location evidence="1">Cytoplasm</location>
    </subcellularLocation>
    <text evidence="1">Shuttles between the nucleus and the cytoplasm.</text>
</comment>
<comment type="similarity">
    <text evidence="4">Belongs to the ZNF593/BUD20 C2H2-type zinc-finger protein family.</text>
</comment>
<sequence length="162" mass="18923">MGMVSKRKKMHYGDTHLQRRWRVRNRRRDLDQIDDDLQTRSGELINQNVDLDKPGFAQFYCVHCAKYFIDDTAMQAHFRTKVHKRRLKALEIEPYSIEEAERAAGRGSFVKPKKRAMETQPSKEDVVAGKRIRVEVVPEDTDATDSPSTSKTKRKKVEKMET</sequence>
<protein>
    <recommendedName>
        <fullName>Zinc finger protein 593 homolog</fullName>
    </recommendedName>
</protein>
<gene>
    <name type="ORF">CG3224</name>
</gene>
<dbReference type="EMBL" id="AE014298">
    <property type="protein sequence ID" value="AAF46181.1"/>
    <property type="molecule type" value="Genomic_DNA"/>
</dbReference>
<dbReference type="EMBL" id="AF188891">
    <property type="protein sequence ID" value="AAG17060.1"/>
    <property type="molecule type" value="Genomic_DNA"/>
</dbReference>
<dbReference type="EMBL" id="AY071068">
    <property type="protein sequence ID" value="AAL48690.1"/>
    <property type="molecule type" value="mRNA"/>
</dbReference>
<dbReference type="RefSeq" id="NP_572335.1">
    <property type="nucleotide sequence ID" value="NM_132107.4"/>
</dbReference>
<dbReference type="SMR" id="Q9W3Y0"/>
<dbReference type="BioGRID" id="58086">
    <property type="interactions" value="4"/>
</dbReference>
<dbReference type="FunCoup" id="Q9W3Y0">
    <property type="interactions" value="409"/>
</dbReference>
<dbReference type="IntAct" id="Q9W3Y0">
    <property type="interactions" value="72"/>
</dbReference>
<dbReference type="STRING" id="7227.FBpp0070952"/>
<dbReference type="PaxDb" id="7227-FBpp0070952"/>
<dbReference type="DNASU" id="31600"/>
<dbReference type="EnsemblMetazoa" id="FBtr0070992">
    <property type="protein sequence ID" value="FBpp0070952"/>
    <property type="gene ID" value="FBgn0029885"/>
</dbReference>
<dbReference type="GeneID" id="31600"/>
<dbReference type="KEGG" id="dme:Dmel_CG3224"/>
<dbReference type="UCSC" id="CG3224-RA">
    <property type="organism name" value="d. melanogaster"/>
</dbReference>
<dbReference type="AGR" id="FB:FBgn0029885"/>
<dbReference type="FlyBase" id="FBgn0029885">
    <property type="gene designation" value="CG3224"/>
</dbReference>
<dbReference type="VEuPathDB" id="VectorBase:FBgn0029885"/>
<dbReference type="eggNOG" id="KOG3408">
    <property type="taxonomic scope" value="Eukaryota"/>
</dbReference>
<dbReference type="GeneTree" id="ENSGT00390000004173"/>
<dbReference type="HOGENOM" id="CLU_117291_1_0_1"/>
<dbReference type="InParanoid" id="Q9W3Y0"/>
<dbReference type="OMA" id="MKDHFRS"/>
<dbReference type="OrthoDB" id="24683at2759"/>
<dbReference type="PhylomeDB" id="Q9W3Y0"/>
<dbReference type="BioGRID-ORCS" id="31600">
    <property type="hits" value="0 hits in 1 CRISPR screen"/>
</dbReference>
<dbReference type="GenomeRNAi" id="31600"/>
<dbReference type="PRO" id="PR:Q9W3Y0"/>
<dbReference type="Proteomes" id="UP000000803">
    <property type="component" value="Chromosome X"/>
</dbReference>
<dbReference type="Bgee" id="FBgn0029885">
    <property type="expression patterns" value="Expressed in adult enteroendocrine precursor cell in adult midgut (Drosophila) and 162 other cell types or tissues"/>
</dbReference>
<dbReference type="GO" id="GO:0005737">
    <property type="term" value="C:cytoplasm"/>
    <property type="evidence" value="ECO:0007669"/>
    <property type="project" value="UniProtKB-SubCell"/>
</dbReference>
<dbReference type="GO" id="GO:0005634">
    <property type="term" value="C:nucleus"/>
    <property type="evidence" value="ECO:0007669"/>
    <property type="project" value="UniProtKB-SubCell"/>
</dbReference>
<dbReference type="GO" id="GO:0003676">
    <property type="term" value="F:nucleic acid binding"/>
    <property type="evidence" value="ECO:0007669"/>
    <property type="project" value="InterPro"/>
</dbReference>
<dbReference type="GO" id="GO:0008270">
    <property type="term" value="F:zinc ion binding"/>
    <property type="evidence" value="ECO:0007669"/>
    <property type="project" value="UniProtKB-KW"/>
</dbReference>
<dbReference type="GO" id="GO:0042254">
    <property type="term" value="P:ribosome biogenesis"/>
    <property type="evidence" value="ECO:0007669"/>
    <property type="project" value="UniProtKB-KW"/>
</dbReference>
<dbReference type="FunFam" id="3.30.160.60:FF:000299">
    <property type="entry name" value="Zinc finger protein 593"/>
    <property type="match status" value="1"/>
</dbReference>
<dbReference type="Gene3D" id="3.30.160.60">
    <property type="entry name" value="Classic Zinc Finger"/>
    <property type="match status" value="1"/>
</dbReference>
<dbReference type="InterPro" id="IPR051879">
    <property type="entry name" value="C2H2-ZF_Maturation_Protein"/>
</dbReference>
<dbReference type="InterPro" id="IPR003604">
    <property type="entry name" value="Matrin/U1-like-C_Znf_C2H2"/>
</dbReference>
<dbReference type="InterPro" id="IPR022755">
    <property type="entry name" value="Znf_C2H2_jaz"/>
</dbReference>
<dbReference type="InterPro" id="IPR036236">
    <property type="entry name" value="Znf_C2H2_sf"/>
</dbReference>
<dbReference type="InterPro" id="IPR013087">
    <property type="entry name" value="Znf_C2H2_type"/>
</dbReference>
<dbReference type="PANTHER" id="PTHR46095">
    <property type="entry name" value="ZINC FINGER PROTEIN 593"/>
    <property type="match status" value="1"/>
</dbReference>
<dbReference type="PANTHER" id="PTHR46095:SF1">
    <property type="entry name" value="ZINC FINGER PROTEIN 593"/>
    <property type="match status" value="1"/>
</dbReference>
<dbReference type="Pfam" id="PF12171">
    <property type="entry name" value="zf-C2H2_jaz"/>
    <property type="match status" value="1"/>
</dbReference>
<dbReference type="SMART" id="SM00451">
    <property type="entry name" value="ZnF_U1"/>
    <property type="match status" value="1"/>
</dbReference>
<dbReference type="SUPFAM" id="SSF57667">
    <property type="entry name" value="beta-beta-alpha zinc fingers"/>
    <property type="match status" value="1"/>
</dbReference>
<dbReference type="PROSITE" id="PS00028">
    <property type="entry name" value="ZINC_FINGER_C2H2_1"/>
    <property type="match status" value="1"/>
</dbReference>
<dbReference type="PROSITE" id="PS50157">
    <property type="entry name" value="ZINC_FINGER_C2H2_2"/>
    <property type="match status" value="1"/>
</dbReference>
<keyword id="KW-0963">Cytoplasm</keyword>
<keyword id="KW-0479">Metal-binding</keyword>
<keyword id="KW-0539">Nucleus</keyword>
<keyword id="KW-1185">Reference proteome</keyword>
<keyword id="KW-0690">Ribosome biogenesis</keyword>
<keyword id="KW-0862">Zinc</keyword>
<keyword id="KW-0863">Zinc-finger</keyword>
<organism>
    <name type="scientific">Drosophila melanogaster</name>
    <name type="common">Fruit fly</name>
    <dbReference type="NCBI Taxonomy" id="7227"/>
    <lineage>
        <taxon>Eukaryota</taxon>
        <taxon>Metazoa</taxon>
        <taxon>Ecdysozoa</taxon>
        <taxon>Arthropoda</taxon>
        <taxon>Hexapoda</taxon>
        <taxon>Insecta</taxon>
        <taxon>Pterygota</taxon>
        <taxon>Neoptera</taxon>
        <taxon>Endopterygota</taxon>
        <taxon>Diptera</taxon>
        <taxon>Brachycera</taxon>
        <taxon>Muscomorpha</taxon>
        <taxon>Ephydroidea</taxon>
        <taxon>Drosophilidae</taxon>
        <taxon>Drosophila</taxon>
        <taxon>Sophophora</taxon>
    </lineage>
</organism>
<proteinExistence type="evidence at transcript level"/>
<name>ZN593_DROME</name>
<accession>Q9W3Y0</accession>
<reference key="1">
    <citation type="journal article" date="2000" name="Science">
        <title>The genome sequence of Drosophila melanogaster.</title>
        <authorList>
            <person name="Adams M.D."/>
            <person name="Celniker S.E."/>
            <person name="Holt R.A."/>
            <person name="Evans C.A."/>
            <person name="Gocayne J.D."/>
            <person name="Amanatides P.G."/>
            <person name="Scherer S.E."/>
            <person name="Li P.W."/>
            <person name="Hoskins R.A."/>
            <person name="Galle R.F."/>
            <person name="George R.A."/>
            <person name="Lewis S.E."/>
            <person name="Richards S."/>
            <person name="Ashburner M."/>
            <person name="Henderson S.N."/>
            <person name="Sutton G.G."/>
            <person name="Wortman J.R."/>
            <person name="Yandell M.D."/>
            <person name="Zhang Q."/>
            <person name="Chen L.X."/>
            <person name="Brandon R.C."/>
            <person name="Rogers Y.-H.C."/>
            <person name="Blazej R.G."/>
            <person name="Champe M."/>
            <person name="Pfeiffer B.D."/>
            <person name="Wan K.H."/>
            <person name="Doyle C."/>
            <person name="Baxter E.G."/>
            <person name="Helt G."/>
            <person name="Nelson C.R."/>
            <person name="Miklos G.L.G."/>
            <person name="Abril J.F."/>
            <person name="Agbayani A."/>
            <person name="An H.-J."/>
            <person name="Andrews-Pfannkoch C."/>
            <person name="Baldwin D."/>
            <person name="Ballew R.M."/>
            <person name="Basu A."/>
            <person name="Baxendale J."/>
            <person name="Bayraktaroglu L."/>
            <person name="Beasley E.M."/>
            <person name="Beeson K.Y."/>
            <person name="Benos P.V."/>
            <person name="Berman B.P."/>
            <person name="Bhandari D."/>
            <person name="Bolshakov S."/>
            <person name="Borkova D."/>
            <person name="Botchan M.R."/>
            <person name="Bouck J."/>
            <person name="Brokstein P."/>
            <person name="Brottier P."/>
            <person name="Burtis K.C."/>
            <person name="Busam D.A."/>
            <person name="Butler H."/>
            <person name="Cadieu E."/>
            <person name="Center A."/>
            <person name="Chandra I."/>
            <person name="Cherry J.M."/>
            <person name="Cawley S."/>
            <person name="Dahlke C."/>
            <person name="Davenport L.B."/>
            <person name="Davies P."/>
            <person name="de Pablos B."/>
            <person name="Delcher A."/>
            <person name="Deng Z."/>
            <person name="Mays A.D."/>
            <person name="Dew I."/>
            <person name="Dietz S.M."/>
            <person name="Dodson K."/>
            <person name="Doup L.E."/>
            <person name="Downes M."/>
            <person name="Dugan-Rocha S."/>
            <person name="Dunkov B.C."/>
            <person name="Dunn P."/>
            <person name="Durbin K.J."/>
            <person name="Evangelista C.C."/>
            <person name="Ferraz C."/>
            <person name="Ferriera S."/>
            <person name="Fleischmann W."/>
            <person name="Fosler C."/>
            <person name="Gabrielian A.E."/>
            <person name="Garg N.S."/>
            <person name="Gelbart W.M."/>
            <person name="Glasser K."/>
            <person name="Glodek A."/>
            <person name="Gong F."/>
            <person name="Gorrell J.H."/>
            <person name="Gu Z."/>
            <person name="Guan P."/>
            <person name="Harris M."/>
            <person name="Harris N.L."/>
            <person name="Harvey D.A."/>
            <person name="Heiman T.J."/>
            <person name="Hernandez J.R."/>
            <person name="Houck J."/>
            <person name="Hostin D."/>
            <person name="Houston K.A."/>
            <person name="Howland T.J."/>
            <person name="Wei M.-H."/>
            <person name="Ibegwam C."/>
            <person name="Jalali M."/>
            <person name="Kalush F."/>
            <person name="Karpen G.H."/>
            <person name="Ke Z."/>
            <person name="Kennison J.A."/>
            <person name="Ketchum K.A."/>
            <person name="Kimmel B.E."/>
            <person name="Kodira C.D."/>
            <person name="Kraft C.L."/>
            <person name="Kravitz S."/>
            <person name="Kulp D."/>
            <person name="Lai Z."/>
            <person name="Lasko P."/>
            <person name="Lei Y."/>
            <person name="Levitsky A.A."/>
            <person name="Li J.H."/>
            <person name="Li Z."/>
            <person name="Liang Y."/>
            <person name="Lin X."/>
            <person name="Liu X."/>
            <person name="Mattei B."/>
            <person name="McIntosh T.C."/>
            <person name="McLeod M.P."/>
            <person name="McPherson D."/>
            <person name="Merkulov G."/>
            <person name="Milshina N.V."/>
            <person name="Mobarry C."/>
            <person name="Morris J."/>
            <person name="Moshrefi A."/>
            <person name="Mount S.M."/>
            <person name="Moy M."/>
            <person name="Murphy B."/>
            <person name="Murphy L."/>
            <person name="Muzny D.M."/>
            <person name="Nelson D.L."/>
            <person name="Nelson D.R."/>
            <person name="Nelson K.A."/>
            <person name="Nixon K."/>
            <person name="Nusskern D.R."/>
            <person name="Pacleb J.M."/>
            <person name="Palazzolo M."/>
            <person name="Pittman G.S."/>
            <person name="Pan S."/>
            <person name="Pollard J."/>
            <person name="Puri V."/>
            <person name="Reese M.G."/>
            <person name="Reinert K."/>
            <person name="Remington K."/>
            <person name="Saunders R.D.C."/>
            <person name="Scheeler F."/>
            <person name="Shen H."/>
            <person name="Shue B.C."/>
            <person name="Siden-Kiamos I."/>
            <person name="Simpson M."/>
            <person name="Skupski M.P."/>
            <person name="Smith T.J."/>
            <person name="Spier E."/>
            <person name="Spradling A.C."/>
            <person name="Stapleton M."/>
            <person name="Strong R."/>
            <person name="Sun E."/>
            <person name="Svirskas R."/>
            <person name="Tector C."/>
            <person name="Turner R."/>
            <person name="Venter E."/>
            <person name="Wang A.H."/>
            <person name="Wang X."/>
            <person name="Wang Z.-Y."/>
            <person name="Wassarman D.A."/>
            <person name="Weinstock G.M."/>
            <person name="Weissenbach J."/>
            <person name="Williams S.M."/>
            <person name="Woodage T."/>
            <person name="Worley K.C."/>
            <person name="Wu D."/>
            <person name="Yang S."/>
            <person name="Yao Q.A."/>
            <person name="Ye J."/>
            <person name="Yeh R.-F."/>
            <person name="Zaveri J.S."/>
            <person name="Zhan M."/>
            <person name="Zhang G."/>
            <person name="Zhao Q."/>
            <person name="Zheng L."/>
            <person name="Zheng X.H."/>
            <person name="Zhong F.N."/>
            <person name="Zhong W."/>
            <person name="Zhou X."/>
            <person name="Zhu S.C."/>
            <person name="Zhu X."/>
            <person name="Smith H.O."/>
            <person name="Gibbs R.A."/>
            <person name="Myers E.W."/>
            <person name="Rubin G.M."/>
            <person name="Venter J.C."/>
        </authorList>
    </citation>
    <scope>NUCLEOTIDE SEQUENCE [LARGE SCALE GENOMIC DNA]</scope>
    <source>
        <strain>Berkeley</strain>
    </source>
</reference>
<reference key="2">
    <citation type="journal article" date="2002" name="Genome Biol.">
        <title>Annotation of the Drosophila melanogaster euchromatic genome: a systematic review.</title>
        <authorList>
            <person name="Misra S."/>
            <person name="Crosby M.A."/>
            <person name="Mungall C.J."/>
            <person name="Matthews B.B."/>
            <person name="Campbell K.S."/>
            <person name="Hradecky P."/>
            <person name="Huang Y."/>
            <person name="Kaminker J.S."/>
            <person name="Millburn G.H."/>
            <person name="Prochnik S.E."/>
            <person name="Smith C.D."/>
            <person name="Tupy J.L."/>
            <person name="Whitfield E.J."/>
            <person name="Bayraktaroglu L."/>
            <person name="Berman B.P."/>
            <person name="Bettencourt B.R."/>
            <person name="Celniker S.E."/>
            <person name="de Grey A.D.N.J."/>
            <person name="Drysdale R.A."/>
            <person name="Harris N.L."/>
            <person name="Richter J."/>
            <person name="Russo S."/>
            <person name="Schroeder A.J."/>
            <person name="Shu S.Q."/>
            <person name="Stapleton M."/>
            <person name="Yamada C."/>
            <person name="Ashburner M."/>
            <person name="Gelbart W.M."/>
            <person name="Rubin G.M."/>
            <person name="Lewis S.E."/>
        </authorList>
    </citation>
    <scope>GENOME REANNOTATION</scope>
    <source>
        <strain>Berkeley</strain>
    </source>
</reference>
<reference key="3">
    <citation type="journal article" date="2002" name="Genome Biol.">
        <title>A Drosophila full-length cDNA resource.</title>
        <authorList>
            <person name="Stapleton M."/>
            <person name="Carlson J.W."/>
            <person name="Brokstein P."/>
            <person name="Yu C."/>
            <person name="Champe M."/>
            <person name="George R.A."/>
            <person name="Guarin H."/>
            <person name="Kronmiller B."/>
            <person name="Pacleb J.M."/>
            <person name="Park S."/>
            <person name="Wan K.H."/>
            <person name="Rubin G.M."/>
            <person name="Celniker S.E."/>
        </authorList>
    </citation>
    <scope>NUCLEOTIDE SEQUENCE [LARGE SCALE MRNA]</scope>
    <source>
        <strain>Berkeley</strain>
        <tissue>Embryo</tissue>
    </source>
</reference>
<evidence type="ECO:0000250" key="1">
    <source>
        <dbReference type="UniProtKB" id="Q08004"/>
    </source>
</evidence>
<evidence type="ECO:0000255" key="2">
    <source>
        <dbReference type="PROSITE-ProRule" id="PRU00042"/>
    </source>
</evidence>
<evidence type="ECO:0000256" key="3">
    <source>
        <dbReference type="SAM" id="MobiDB-lite"/>
    </source>
</evidence>
<evidence type="ECO:0000305" key="4"/>
<feature type="chain" id="PRO_0000331296" description="Zinc finger protein 593 homolog">
    <location>
        <begin position="1"/>
        <end position="162"/>
    </location>
</feature>
<feature type="zinc finger region" description="C2H2-type" evidence="2">
    <location>
        <begin position="59"/>
        <end position="83"/>
    </location>
</feature>
<feature type="region of interest" description="Disordered" evidence="3">
    <location>
        <begin position="110"/>
        <end position="162"/>
    </location>
</feature>
<feature type="compositionally biased region" description="Basic and acidic residues" evidence="3">
    <location>
        <begin position="115"/>
        <end position="136"/>
    </location>
</feature>
<feature type="compositionally biased region" description="Basic residues" evidence="3">
    <location>
        <begin position="151"/>
        <end position="162"/>
    </location>
</feature>